<accession>Q483A0</accession>
<protein>
    <recommendedName>
        <fullName evidence="1">Sulfate adenylyltransferase subunit 2</fullName>
        <ecNumber evidence="1">2.7.7.4</ecNumber>
    </recommendedName>
    <alternativeName>
        <fullName evidence="1">ATP-sulfurylase small subunit</fullName>
    </alternativeName>
    <alternativeName>
        <fullName evidence="1">Sulfate adenylate transferase</fullName>
        <shortName evidence="1">SAT</shortName>
    </alternativeName>
</protein>
<proteinExistence type="inferred from homology"/>
<reference key="1">
    <citation type="journal article" date="2005" name="Proc. Natl. Acad. Sci. U.S.A.">
        <title>The psychrophilic lifestyle as revealed by the genome sequence of Colwellia psychrerythraea 34H through genomic and proteomic analyses.</title>
        <authorList>
            <person name="Methe B.A."/>
            <person name="Nelson K.E."/>
            <person name="Deming J.W."/>
            <person name="Momen B."/>
            <person name="Melamud E."/>
            <person name="Zhang X."/>
            <person name="Moult J."/>
            <person name="Madupu R."/>
            <person name="Nelson W.C."/>
            <person name="Dodson R.J."/>
            <person name="Brinkac L.M."/>
            <person name="Daugherty S.C."/>
            <person name="Durkin A.S."/>
            <person name="DeBoy R.T."/>
            <person name="Kolonay J.F."/>
            <person name="Sullivan S.A."/>
            <person name="Zhou L."/>
            <person name="Davidsen T.M."/>
            <person name="Wu M."/>
            <person name="Huston A.L."/>
            <person name="Lewis M."/>
            <person name="Weaver B."/>
            <person name="Weidman J.F."/>
            <person name="Khouri H."/>
            <person name="Utterback T.R."/>
            <person name="Feldblyum T.V."/>
            <person name="Fraser C.M."/>
        </authorList>
    </citation>
    <scope>NUCLEOTIDE SEQUENCE [LARGE SCALE GENOMIC DNA]</scope>
    <source>
        <strain>34H / ATCC BAA-681</strain>
    </source>
</reference>
<evidence type="ECO:0000255" key="1">
    <source>
        <dbReference type="HAMAP-Rule" id="MF_00064"/>
    </source>
</evidence>
<gene>
    <name evidence="1" type="primary">cysD</name>
    <name type="ordered locus">CPS_2142</name>
</gene>
<comment type="function">
    <text evidence="1">With CysN forms the ATP sulfurylase (ATPS) that catalyzes the adenylation of sulfate producing adenosine 5'-phosphosulfate (APS) and diphosphate, the first enzymatic step in sulfur assimilation pathway. APS synthesis involves the formation of a high-energy phosphoric-sulfuric acid anhydride bond driven by GTP hydrolysis by CysN coupled to ATP hydrolysis by CysD.</text>
</comment>
<comment type="catalytic activity">
    <reaction evidence="1">
        <text>sulfate + ATP + H(+) = adenosine 5'-phosphosulfate + diphosphate</text>
        <dbReference type="Rhea" id="RHEA:18133"/>
        <dbReference type="ChEBI" id="CHEBI:15378"/>
        <dbReference type="ChEBI" id="CHEBI:16189"/>
        <dbReference type="ChEBI" id="CHEBI:30616"/>
        <dbReference type="ChEBI" id="CHEBI:33019"/>
        <dbReference type="ChEBI" id="CHEBI:58243"/>
        <dbReference type="EC" id="2.7.7.4"/>
    </reaction>
</comment>
<comment type="pathway">
    <text evidence="1">Sulfur metabolism; hydrogen sulfide biosynthesis; sulfite from sulfate: step 1/3.</text>
</comment>
<comment type="subunit">
    <text evidence="1">Heterodimer composed of CysD, the smaller subunit, and CysN.</text>
</comment>
<comment type="similarity">
    <text evidence="1">Belongs to the PAPS reductase family. CysD subfamily.</text>
</comment>
<keyword id="KW-0067">ATP-binding</keyword>
<keyword id="KW-0547">Nucleotide-binding</keyword>
<keyword id="KW-0548">Nucleotidyltransferase</keyword>
<keyword id="KW-0808">Transferase</keyword>
<organism>
    <name type="scientific">Colwellia psychrerythraea (strain 34H / ATCC BAA-681)</name>
    <name type="common">Vibrio psychroerythus</name>
    <dbReference type="NCBI Taxonomy" id="167879"/>
    <lineage>
        <taxon>Bacteria</taxon>
        <taxon>Pseudomonadati</taxon>
        <taxon>Pseudomonadota</taxon>
        <taxon>Gammaproteobacteria</taxon>
        <taxon>Alteromonadales</taxon>
        <taxon>Colwelliaceae</taxon>
        <taxon>Colwellia</taxon>
    </lineage>
</organism>
<name>CYSD_COLP3</name>
<dbReference type="EC" id="2.7.7.4" evidence="1"/>
<dbReference type="EMBL" id="CP000083">
    <property type="protein sequence ID" value="AAZ26896.1"/>
    <property type="molecule type" value="Genomic_DNA"/>
</dbReference>
<dbReference type="RefSeq" id="WP_011042961.1">
    <property type="nucleotide sequence ID" value="NC_003910.7"/>
</dbReference>
<dbReference type="SMR" id="Q483A0"/>
<dbReference type="STRING" id="167879.CPS_2142"/>
<dbReference type="KEGG" id="cps:CPS_2142"/>
<dbReference type="eggNOG" id="COG0175">
    <property type="taxonomic scope" value="Bacteria"/>
</dbReference>
<dbReference type="HOGENOM" id="CLU_043026_0_0_6"/>
<dbReference type="UniPathway" id="UPA00140">
    <property type="reaction ID" value="UER00204"/>
</dbReference>
<dbReference type="Proteomes" id="UP000000547">
    <property type="component" value="Chromosome"/>
</dbReference>
<dbReference type="GO" id="GO:0005524">
    <property type="term" value="F:ATP binding"/>
    <property type="evidence" value="ECO:0007669"/>
    <property type="project" value="UniProtKB-KW"/>
</dbReference>
<dbReference type="GO" id="GO:0004781">
    <property type="term" value="F:sulfate adenylyltransferase (ATP) activity"/>
    <property type="evidence" value="ECO:0007669"/>
    <property type="project" value="UniProtKB-UniRule"/>
</dbReference>
<dbReference type="GO" id="GO:0070814">
    <property type="term" value="P:hydrogen sulfide biosynthetic process"/>
    <property type="evidence" value="ECO:0007669"/>
    <property type="project" value="UniProtKB-UniRule"/>
</dbReference>
<dbReference type="GO" id="GO:0000103">
    <property type="term" value="P:sulfate assimilation"/>
    <property type="evidence" value="ECO:0007669"/>
    <property type="project" value="UniProtKB-UniRule"/>
</dbReference>
<dbReference type="CDD" id="cd23946">
    <property type="entry name" value="Sulfate_adenylyltransferase_2"/>
    <property type="match status" value="1"/>
</dbReference>
<dbReference type="FunFam" id="3.40.50.620:FF:000002">
    <property type="entry name" value="Sulfate adenylyltransferase subunit 2"/>
    <property type="match status" value="1"/>
</dbReference>
<dbReference type="Gene3D" id="3.40.50.620">
    <property type="entry name" value="HUPs"/>
    <property type="match status" value="1"/>
</dbReference>
<dbReference type="HAMAP" id="MF_00064">
    <property type="entry name" value="Sulf_adenylyltr_sub2"/>
    <property type="match status" value="1"/>
</dbReference>
<dbReference type="InterPro" id="IPR002500">
    <property type="entry name" value="PAPS_reduct_dom"/>
</dbReference>
<dbReference type="InterPro" id="IPR014729">
    <property type="entry name" value="Rossmann-like_a/b/a_fold"/>
</dbReference>
<dbReference type="InterPro" id="IPR011784">
    <property type="entry name" value="SO4_adenylTrfase_ssu"/>
</dbReference>
<dbReference type="InterPro" id="IPR050128">
    <property type="entry name" value="Sulfate_adenylyltrnsfr_sub2"/>
</dbReference>
<dbReference type="NCBIfam" id="TIGR02039">
    <property type="entry name" value="CysD"/>
    <property type="match status" value="1"/>
</dbReference>
<dbReference type="NCBIfam" id="NF003587">
    <property type="entry name" value="PRK05253.1"/>
    <property type="match status" value="1"/>
</dbReference>
<dbReference type="NCBIfam" id="NF009214">
    <property type="entry name" value="PRK12563.1"/>
    <property type="match status" value="1"/>
</dbReference>
<dbReference type="PANTHER" id="PTHR43196">
    <property type="entry name" value="SULFATE ADENYLYLTRANSFERASE SUBUNIT 2"/>
    <property type="match status" value="1"/>
</dbReference>
<dbReference type="PANTHER" id="PTHR43196:SF1">
    <property type="entry name" value="SULFATE ADENYLYLTRANSFERASE SUBUNIT 2"/>
    <property type="match status" value="1"/>
</dbReference>
<dbReference type="Pfam" id="PF01507">
    <property type="entry name" value="PAPS_reduct"/>
    <property type="match status" value="1"/>
</dbReference>
<dbReference type="PIRSF" id="PIRSF002936">
    <property type="entry name" value="CysDAde_trans"/>
    <property type="match status" value="1"/>
</dbReference>
<dbReference type="SUPFAM" id="SSF52402">
    <property type="entry name" value="Adenine nucleotide alpha hydrolases-like"/>
    <property type="match status" value="1"/>
</dbReference>
<sequence>MNLTHLKTLEAESIHIFREVAAEFDNPVMLYSVGKDSAVLLHLARKAFAPGKIPFPLLHVDTNWKFKEMIAFRDQMAKDYDFELLVHKNPEGIEMGMGPFTHGSATHTDVMKTQGLKQALNKYGFDAAFGGARRDEEKSRAKERVYSFRDENHRWDPKSQRPELWNIYNGKVNKGESIRVFPLSNWTELDIWQYIYLESIPIVPLYLAEKRPVVERDGTLIMVDDDRMPIGEDEEVQMKSVRFRTLGCYPLTGAVESTANTLPEIIQEMLLTKTSERQGRVIDHDSAGSMEKKKMEGYF</sequence>
<feature type="chain" id="PRO_0000340194" description="Sulfate adenylyltransferase subunit 2">
    <location>
        <begin position="1"/>
        <end position="299"/>
    </location>
</feature>